<evidence type="ECO:0000255" key="1">
    <source>
        <dbReference type="HAMAP-Rule" id="MF_00741"/>
    </source>
</evidence>
<gene>
    <name evidence="1" type="primary">purM</name>
    <name type="ordered locus">SPJ_0079</name>
</gene>
<comment type="catalytic activity">
    <reaction evidence="1">
        <text>2-formamido-N(1)-(5-O-phospho-beta-D-ribosyl)acetamidine + ATP = 5-amino-1-(5-phospho-beta-D-ribosyl)imidazole + ADP + phosphate + H(+)</text>
        <dbReference type="Rhea" id="RHEA:23032"/>
        <dbReference type="ChEBI" id="CHEBI:15378"/>
        <dbReference type="ChEBI" id="CHEBI:30616"/>
        <dbReference type="ChEBI" id="CHEBI:43474"/>
        <dbReference type="ChEBI" id="CHEBI:137981"/>
        <dbReference type="ChEBI" id="CHEBI:147287"/>
        <dbReference type="ChEBI" id="CHEBI:456216"/>
        <dbReference type="EC" id="6.3.3.1"/>
    </reaction>
</comment>
<comment type="pathway">
    <text evidence="1">Purine metabolism; IMP biosynthesis via de novo pathway; 5-amino-1-(5-phospho-D-ribosyl)imidazole from N(2)-formyl-N(1)-(5-phospho-D-ribosyl)glycinamide: step 2/2.</text>
</comment>
<comment type="subcellular location">
    <subcellularLocation>
        <location evidence="1">Cytoplasm</location>
    </subcellularLocation>
</comment>
<comment type="similarity">
    <text evidence="1">Belongs to the AIR synthase family.</text>
</comment>
<accession>C1CBM4</accession>
<protein>
    <recommendedName>
        <fullName evidence="1">Phosphoribosylformylglycinamidine cyclo-ligase</fullName>
        <ecNumber evidence="1">6.3.3.1</ecNumber>
    </recommendedName>
    <alternativeName>
        <fullName evidence="1">AIR synthase</fullName>
    </alternativeName>
    <alternativeName>
        <fullName evidence="1">AIRS</fullName>
    </alternativeName>
    <alternativeName>
        <fullName evidence="1">Phosphoribosyl-aminoimidazole synthetase</fullName>
    </alternativeName>
</protein>
<reference key="1">
    <citation type="journal article" date="2010" name="Genome Biol.">
        <title>Structure and dynamics of the pan-genome of Streptococcus pneumoniae and closely related species.</title>
        <authorList>
            <person name="Donati C."/>
            <person name="Hiller N.L."/>
            <person name="Tettelin H."/>
            <person name="Muzzi A."/>
            <person name="Croucher N.J."/>
            <person name="Angiuoli S.V."/>
            <person name="Oggioni M."/>
            <person name="Dunning Hotopp J.C."/>
            <person name="Hu F.Z."/>
            <person name="Riley D.R."/>
            <person name="Covacci A."/>
            <person name="Mitchell T.J."/>
            <person name="Bentley S.D."/>
            <person name="Kilian M."/>
            <person name="Ehrlich G.D."/>
            <person name="Rappuoli R."/>
            <person name="Moxon E.R."/>
            <person name="Masignani V."/>
        </authorList>
    </citation>
    <scope>NUCLEOTIDE SEQUENCE [LARGE SCALE GENOMIC DNA]</scope>
    <source>
        <strain>JJA</strain>
    </source>
</reference>
<sequence length="340" mass="36502">MTNKNAYAQSGVDVEAGYEVVERIKKHVARTERAGVMGALGGFGGMFDLSKTGVKEPVLISGTDGVGTKLMLAIKYDKHDTIGQDCVAMCVNDIIAAGAEPLYFLDYVATGKNEPAKLEQVVAGVAEGCVQAGAALIGGETAEMPGMYGEDDYDLAGFAVGVAEKSQIIDGSKVVEGDVLLGLASSGIHSNGYSLVRRVFADYTGEEVLPELEGKKLKEVLLEPTRIYVKAVLPLIKEELVNGIAHITGGGFIENVPRMFADDLAAEIDESKVPVLPIFKALEKYGQIKHEEMFEIFNMGVGLMLAVSPENVERVKELLDEAVYEIGRIVKKENESVIIK</sequence>
<feature type="chain" id="PRO_1000148302" description="Phosphoribosylformylglycinamidine cyclo-ligase">
    <location>
        <begin position="1"/>
        <end position="340"/>
    </location>
</feature>
<keyword id="KW-0067">ATP-binding</keyword>
<keyword id="KW-0963">Cytoplasm</keyword>
<keyword id="KW-0436">Ligase</keyword>
<keyword id="KW-0547">Nucleotide-binding</keyword>
<keyword id="KW-0658">Purine biosynthesis</keyword>
<proteinExistence type="inferred from homology"/>
<organism>
    <name type="scientific">Streptococcus pneumoniae (strain JJA)</name>
    <dbReference type="NCBI Taxonomy" id="488222"/>
    <lineage>
        <taxon>Bacteria</taxon>
        <taxon>Bacillati</taxon>
        <taxon>Bacillota</taxon>
        <taxon>Bacilli</taxon>
        <taxon>Lactobacillales</taxon>
        <taxon>Streptococcaceae</taxon>
        <taxon>Streptococcus</taxon>
    </lineage>
</organism>
<dbReference type="EC" id="6.3.3.1" evidence="1"/>
<dbReference type="EMBL" id="CP000919">
    <property type="protein sequence ID" value="ACO19797.1"/>
    <property type="molecule type" value="Genomic_DNA"/>
</dbReference>
<dbReference type="RefSeq" id="WP_000182575.1">
    <property type="nucleotide sequence ID" value="NC_012466.1"/>
</dbReference>
<dbReference type="SMR" id="C1CBM4"/>
<dbReference type="KEGG" id="sjj:SPJ_0079"/>
<dbReference type="HOGENOM" id="CLU_047116_0_0_9"/>
<dbReference type="UniPathway" id="UPA00074">
    <property type="reaction ID" value="UER00129"/>
</dbReference>
<dbReference type="Proteomes" id="UP000002206">
    <property type="component" value="Chromosome"/>
</dbReference>
<dbReference type="GO" id="GO:0005829">
    <property type="term" value="C:cytosol"/>
    <property type="evidence" value="ECO:0007669"/>
    <property type="project" value="TreeGrafter"/>
</dbReference>
<dbReference type="GO" id="GO:0005524">
    <property type="term" value="F:ATP binding"/>
    <property type="evidence" value="ECO:0007669"/>
    <property type="project" value="UniProtKB-KW"/>
</dbReference>
<dbReference type="GO" id="GO:0004637">
    <property type="term" value="F:phosphoribosylamine-glycine ligase activity"/>
    <property type="evidence" value="ECO:0007669"/>
    <property type="project" value="TreeGrafter"/>
</dbReference>
<dbReference type="GO" id="GO:0004641">
    <property type="term" value="F:phosphoribosylformylglycinamidine cyclo-ligase activity"/>
    <property type="evidence" value="ECO:0007669"/>
    <property type="project" value="UniProtKB-UniRule"/>
</dbReference>
<dbReference type="GO" id="GO:0006189">
    <property type="term" value="P:'de novo' IMP biosynthetic process"/>
    <property type="evidence" value="ECO:0007669"/>
    <property type="project" value="UniProtKB-UniRule"/>
</dbReference>
<dbReference type="GO" id="GO:0046084">
    <property type="term" value="P:adenine biosynthetic process"/>
    <property type="evidence" value="ECO:0007669"/>
    <property type="project" value="TreeGrafter"/>
</dbReference>
<dbReference type="CDD" id="cd02196">
    <property type="entry name" value="PurM"/>
    <property type="match status" value="1"/>
</dbReference>
<dbReference type="FunFam" id="3.30.1330.10:FF:000001">
    <property type="entry name" value="Phosphoribosylformylglycinamidine cyclo-ligase"/>
    <property type="match status" value="1"/>
</dbReference>
<dbReference type="FunFam" id="3.90.650.10:FF:000011">
    <property type="entry name" value="Phosphoribosylformylglycinamidine cyclo-ligase"/>
    <property type="match status" value="1"/>
</dbReference>
<dbReference type="Gene3D" id="3.90.650.10">
    <property type="entry name" value="PurM-like C-terminal domain"/>
    <property type="match status" value="1"/>
</dbReference>
<dbReference type="Gene3D" id="3.30.1330.10">
    <property type="entry name" value="PurM-like, N-terminal domain"/>
    <property type="match status" value="1"/>
</dbReference>
<dbReference type="HAMAP" id="MF_00741">
    <property type="entry name" value="AIRS"/>
    <property type="match status" value="1"/>
</dbReference>
<dbReference type="InterPro" id="IPR010918">
    <property type="entry name" value="PurM-like_C_dom"/>
</dbReference>
<dbReference type="InterPro" id="IPR036676">
    <property type="entry name" value="PurM-like_C_sf"/>
</dbReference>
<dbReference type="InterPro" id="IPR016188">
    <property type="entry name" value="PurM-like_N"/>
</dbReference>
<dbReference type="InterPro" id="IPR036921">
    <property type="entry name" value="PurM-like_N_sf"/>
</dbReference>
<dbReference type="InterPro" id="IPR004733">
    <property type="entry name" value="PurM_cligase"/>
</dbReference>
<dbReference type="NCBIfam" id="TIGR00878">
    <property type="entry name" value="purM"/>
    <property type="match status" value="1"/>
</dbReference>
<dbReference type="PANTHER" id="PTHR10520:SF12">
    <property type="entry name" value="TRIFUNCTIONAL PURINE BIOSYNTHETIC PROTEIN ADENOSINE-3"/>
    <property type="match status" value="1"/>
</dbReference>
<dbReference type="PANTHER" id="PTHR10520">
    <property type="entry name" value="TRIFUNCTIONAL PURINE BIOSYNTHETIC PROTEIN ADENOSINE-3-RELATED"/>
    <property type="match status" value="1"/>
</dbReference>
<dbReference type="Pfam" id="PF00586">
    <property type="entry name" value="AIRS"/>
    <property type="match status" value="1"/>
</dbReference>
<dbReference type="Pfam" id="PF02769">
    <property type="entry name" value="AIRS_C"/>
    <property type="match status" value="1"/>
</dbReference>
<dbReference type="SUPFAM" id="SSF56042">
    <property type="entry name" value="PurM C-terminal domain-like"/>
    <property type="match status" value="1"/>
</dbReference>
<dbReference type="SUPFAM" id="SSF55326">
    <property type="entry name" value="PurM N-terminal domain-like"/>
    <property type="match status" value="1"/>
</dbReference>
<name>PUR5_STRZJ</name>